<protein>
    <recommendedName>
        <fullName evidence="1">Threonine--tRNA ligase</fullName>
        <ecNumber evidence="1">6.1.1.3</ecNumber>
    </recommendedName>
    <alternativeName>
        <fullName evidence="1">Threonyl-tRNA synthetase</fullName>
        <shortName evidence="1">ThrRS</shortName>
    </alternativeName>
</protein>
<gene>
    <name evidence="1" type="primary">thrS</name>
    <name type="ordered locus">JTY_2633</name>
</gene>
<reference key="1">
    <citation type="journal article" date="2009" name="Vaccine">
        <title>Whole genome sequence analysis of Mycobacterium bovis bacillus Calmette-Guerin (BCG) Tokyo 172: a comparative study of BCG vaccine substrains.</title>
        <authorList>
            <person name="Seki M."/>
            <person name="Honda I."/>
            <person name="Fujita I."/>
            <person name="Yano I."/>
            <person name="Yamamoto S."/>
            <person name="Koyama A."/>
        </authorList>
    </citation>
    <scope>NUCLEOTIDE SEQUENCE [LARGE SCALE GENOMIC DNA]</scope>
    <source>
        <strain>BCG / Tokyo 172 / ATCC 35737 / TMC 1019</strain>
    </source>
</reference>
<accession>C1AF85</accession>
<keyword id="KW-0030">Aminoacyl-tRNA synthetase</keyword>
<keyword id="KW-0067">ATP-binding</keyword>
<keyword id="KW-0963">Cytoplasm</keyword>
<keyword id="KW-0436">Ligase</keyword>
<keyword id="KW-0479">Metal-binding</keyword>
<keyword id="KW-0547">Nucleotide-binding</keyword>
<keyword id="KW-0648">Protein biosynthesis</keyword>
<keyword id="KW-0694">RNA-binding</keyword>
<keyword id="KW-0820">tRNA-binding</keyword>
<keyword id="KW-0862">Zinc</keyword>
<evidence type="ECO:0000255" key="1">
    <source>
        <dbReference type="HAMAP-Rule" id="MF_00184"/>
    </source>
</evidence>
<evidence type="ECO:0000255" key="2">
    <source>
        <dbReference type="PROSITE-ProRule" id="PRU01228"/>
    </source>
</evidence>
<evidence type="ECO:0000256" key="3">
    <source>
        <dbReference type="SAM" id="MobiDB-lite"/>
    </source>
</evidence>
<organism>
    <name type="scientific">Mycobacterium bovis (strain BCG / Tokyo 172 / ATCC 35737 / TMC 1019)</name>
    <dbReference type="NCBI Taxonomy" id="561275"/>
    <lineage>
        <taxon>Bacteria</taxon>
        <taxon>Bacillati</taxon>
        <taxon>Actinomycetota</taxon>
        <taxon>Actinomycetes</taxon>
        <taxon>Mycobacteriales</taxon>
        <taxon>Mycobacteriaceae</taxon>
        <taxon>Mycobacterium</taxon>
        <taxon>Mycobacterium tuberculosis complex</taxon>
    </lineage>
</organism>
<proteinExistence type="inferred from homology"/>
<dbReference type="EC" id="6.1.1.3" evidence="1"/>
<dbReference type="EMBL" id="AP010918">
    <property type="protein sequence ID" value="BAH26914.1"/>
    <property type="molecule type" value="Genomic_DNA"/>
</dbReference>
<dbReference type="RefSeq" id="WP_003413486.1">
    <property type="nucleotide sequence ID" value="NZ_CP014566.1"/>
</dbReference>
<dbReference type="SMR" id="C1AF85"/>
<dbReference type="KEGG" id="mbt:JTY_2633"/>
<dbReference type="HOGENOM" id="CLU_008554_0_1_11"/>
<dbReference type="GO" id="GO:0005737">
    <property type="term" value="C:cytoplasm"/>
    <property type="evidence" value="ECO:0007669"/>
    <property type="project" value="UniProtKB-SubCell"/>
</dbReference>
<dbReference type="GO" id="GO:0005524">
    <property type="term" value="F:ATP binding"/>
    <property type="evidence" value="ECO:0007669"/>
    <property type="project" value="UniProtKB-UniRule"/>
</dbReference>
<dbReference type="GO" id="GO:0046872">
    <property type="term" value="F:metal ion binding"/>
    <property type="evidence" value="ECO:0007669"/>
    <property type="project" value="UniProtKB-KW"/>
</dbReference>
<dbReference type="GO" id="GO:0004829">
    <property type="term" value="F:threonine-tRNA ligase activity"/>
    <property type="evidence" value="ECO:0007669"/>
    <property type="project" value="UniProtKB-UniRule"/>
</dbReference>
<dbReference type="GO" id="GO:0000049">
    <property type="term" value="F:tRNA binding"/>
    <property type="evidence" value="ECO:0007669"/>
    <property type="project" value="UniProtKB-KW"/>
</dbReference>
<dbReference type="GO" id="GO:0006435">
    <property type="term" value="P:threonyl-tRNA aminoacylation"/>
    <property type="evidence" value="ECO:0007669"/>
    <property type="project" value="UniProtKB-UniRule"/>
</dbReference>
<dbReference type="CDD" id="cd00860">
    <property type="entry name" value="ThrRS_anticodon"/>
    <property type="match status" value="1"/>
</dbReference>
<dbReference type="CDD" id="cd00771">
    <property type="entry name" value="ThrRS_core"/>
    <property type="match status" value="1"/>
</dbReference>
<dbReference type="FunFam" id="3.30.54.20:FF:000003">
    <property type="entry name" value="Threonine--tRNA ligase"/>
    <property type="match status" value="1"/>
</dbReference>
<dbReference type="FunFam" id="3.30.930.10:FF:000019">
    <property type="entry name" value="Threonine--tRNA ligase"/>
    <property type="match status" value="1"/>
</dbReference>
<dbReference type="FunFam" id="3.40.50.800:FF:000001">
    <property type="entry name" value="Threonine--tRNA ligase"/>
    <property type="match status" value="1"/>
</dbReference>
<dbReference type="FunFam" id="3.30.980.10:FF:000005">
    <property type="entry name" value="Threonyl-tRNA synthetase, mitochondrial"/>
    <property type="match status" value="1"/>
</dbReference>
<dbReference type="Gene3D" id="3.30.54.20">
    <property type="match status" value="1"/>
</dbReference>
<dbReference type="Gene3D" id="3.40.50.800">
    <property type="entry name" value="Anticodon-binding domain"/>
    <property type="match status" value="1"/>
</dbReference>
<dbReference type="Gene3D" id="3.30.930.10">
    <property type="entry name" value="Bira Bifunctional Protein, Domain 2"/>
    <property type="match status" value="1"/>
</dbReference>
<dbReference type="Gene3D" id="3.30.980.10">
    <property type="entry name" value="Threonyl-trna Synthetase, Chain A, domain 2"/>
    <property type="match status" value="1"/>
</dbReference>
<dbReference type="HAMAP" id="MF_00184">
    <property type="entry name" value="Thr_tRNA_synth"/>
    <property type="match status" value="1"/>
</dbReference>
<dbReference type="InterPro" id="IPR002314">
    <property type="entry name" value="aa-tRNA-synt_IIb"/>
</dbReference>
<dbReference type="InterPro" id="IPR006195">
    <property type="entry name" value="aa-tRNA-synth_II"/>
</dbReference>
<dbReference type="InterPro" id="IPR045864">
    <property type="entry name" value="aa-tRNA-synth_II/BPL/LPL"/>
</dbReference>
<dbReference type="InterPro" id="IPR004154">
    <property type="entry name" value="Anticodon-bd"/>
</dbReference>
<dbReference type="InterPro" id="IPR036621">
    <property type="entry name" value="Anticodon-bd_dom_sf"/>
</dbReference>
<dbReference type="InterPro" id="IPR004095">
    <property type="entry name" value="TGS"/>
</dbReference>
<dbReference type="InterPro" id="IPR002320">
    <property type="entry name" value="Thr-tRNA-ligase_IIa"/>
</dbReference>
<dbReference type="InterPro" id="IPR018163">
    <property type="entry name" value="Thr/Ala-tRNA-synth_IIc_edit"/>
</dbReference>
<dbReference type="InterPro" id="IPR047246">
    <property type="entry name" value="ThrRS_anticodon"/>
</dbReference>
<dbReference type="InterPro" id="IPR033728">
    <property type="entry name" value="ThrRS_core"/>
</dbReference>
<dbReference type="InterPro" id="IPR012947">
    <property type="entry name" value="tRNA_SAD"/>
</dbReference>
<dbReference type="NCBIfam" id="TIGR00418">
    <property type="entry name" value="thrS"/>
    <property type="match status" value="1"/>
</dbReference>
<dbReference type="PANTHER" id="PTHR11451:SF44">
    <property type="entry name" value="THREONINE--TRNA LIGASE, CHLOROPLASTIC_MITOCHONDRIAL 2"/>
    <property type="match status" value="1"/>
</dbReference>
<dbReference type="PANTHER" id="PTHR11451">
    <property type="entry name" value="THREONINE-TRNA LIGASE"/>
    <property type="match status" value="1"/>
</dbReference>
<dbReference type="Pfam" id="PF03129">
    <property type="entry name" value="HGTP_anticodon"/>
    <property type="match status" value="1"/>
</dbReference>
<dbReference type="Pfam" id="PF00587">
    <property type="entry name" value="tRNA-synt_2b"/>
    <property type="match status" value="1"/>
</dbReference>
<dbReference type="Pfam" id="PF07973">
    <property type="entry name" value="tRNA_SAD"/>
    <property type="match status" value="1"/>
</dbReference>
<dbReference type="PRINTS" id="PR01047">
    <property type="entry name" value="TRNASYNTHTHR"/>
</dbReference>
<dbReference type="SMART" id="SM00863">
    <property type="entry name" value="tRNA_SAD"/>
    <property type="match status" value="1"/>
</dbReference>
<dbReference type="SUPFAM" id="SSF52954">
    <property type="entry name" value="Class II aaRS ABD-related"/>
    <property type="match status" value="1"/>
</dbReference>
<dbReference type="SUPFAM" id="SSF55681">
    <property type="entry name" value="Class II aaRS and biotin synthetases"/>
    <property type="match status" value="1"/>
</dbReference>
<dbReference type="SUPFAM" id="SSF55186">
    <property type="entry name" value="ThrRS/AlaRS common domain"/>
    <property type="match status" value="1"/>
</dbReference>
<dbReference type="PROSITE" id="PS50862">
    <property type="entry name" value="AA_TRNA_LIGASE_II"/>
    <property type="match status" value="1"/>
</dbReference>
<dbReference type="PROSITE" id="PS51880">
    <property type="entry name" value="TGS"/>
    <property type="match status" value="1"/>
</dbReference>
<feature type="chain" id="PRO_1000199556" description="Threonine--tRNA ligase">
    <location>
        <begin position="1"/>
        <end position="692"/>
    </location>
</feature>
<feature type="domain" description="TGS" evidence="2">
    <location>
        <begin position="1"/>
        <end position="74"/>
    </location>
</feature>
<feature type="region of interest" description="Disordered" evidence="3">
    <location>
        <begin position="1"/>
        <end position="20"/>
    </location>
</feature>
<feature type="region of interest" description="Catalytic" evidence="1">
    <location>
        <begin position="269"/>
        <end position="575"/>
    </location>
</feature>
<feature type="binding site" evidence="1">
    <location>
        <position position="374"/>
    </location>
    <ligand>
        <name>Zn(2+)</name>
        <dbReference type="ChEBI" id="CHEBI:29105"/>
    </ligand>
</feature>
<feature type="binding site" evidence="1">
    <location>
        <position position="425"/>
    </location>
    <ligand>
        <name>Zn(2+)</name>
        <dbReference type="ChEBI" id="CHEBI:29105"/>
    </ligand>
</feature>
<feature type="binding site" evidence="1">
    <location>
        <position position="552"/>
    </location>
    <ligand>
        <name>Zn(2+)</name>
        <dbReference type="ChEBI" id="CHEBI:29105"/>
    </ligand>
</feature>
<comment type="function">
    <text evidence="1">Catalyzes the attachment of threonine to tRNA(Thr) in a two-step reaction: L-threonine is first activated by ATP to form Thr-AMP and then transferred to the acceptor end of tRNA(Thr). Also edits incorrectly charged L-seryl-tRNA(Thr).</text>
</comment>
<comment type="catalytic activity">
    <reaction evidence="1">
        <text>tRNA(Thr) + L-threonine + ATP = L-threonyl-tRNA(Thr) + AMP + diphosphate + H(+)</text>
        <dbReference type="Rhea" id="RHEA:24624"/>
        <dbReference type="Rhea" id="RHEA-COMP:9670"/>
        <dbReference type="Rhea" id="RHEA-COMP:9704"/>
        <dbReference type="ChEBI" id="CHEBI:15378"/>
        <dbReference type="ChEBI" id="CHEBI:30616"/>
        <dbReference type="ChEBI" id="CHEBI:33019"/>
        <dbReference type="ChEBI" id="CHEBI:57926"/>
        <dbReference type="ChEBI" id="CHEBI:78442"/>
        <dbReference type="ChEBI" id="CHEBI:78534"/>
        <dbReference type="ChEBI" id="CHEBI:456215"/>
        <dbReference type="EC" id="6.1.1.3"/>
    </reaction>
</comment>
<comment type="cofactor">
    <cofactor evidence="1">
        <name>Zn(2+)</name>
        <dbReference type="ChEBI" id="CHEBI:29105"/>
    </cofactor>
    <text evidence="1">Binds 1 zinc ion per subunit.</text>
</comment>
<comment type="subunit">
    <text evidence="1">Homodimer.</text>
</comment>
<comment type="subcellular location">
    <subcellularLocation>
        <location evidence="1">Cytoplasm</location>
    </subcellularLocation>
</comment>
<comment type="similarity">
    <text evidence="1">Belongs to the class-II aminoacyl-tRNA synthetase family.</text>
</comment>
<name>SYT_MYCBT</name>
<sequence>MSAPAQPAPGVDGGDPSQARIRVPAGTTAATAVGEAGLPRRGTPDAIVVVRDADGNLRDLSWVPDVDTDITPVAANTDDGRSVIRHSTAHVLAQAVQELFPQAKLGIGPPITDGFYYDFDVPEPFTPEDLAALEKRMRQIVKEGQLFDRRVYESTEQARAELANEPYKLELVDDKSGDAEIMEVGGDELTAYDNLNPRTRERVWGDLCRGPHIPTTKHIPAFKLTRSSAAYWRGDQKNASLQRIYGTAWESQEALDRHLEFIEEAQRRDHRKLGVELDLFSFPDEIGSGLAVFHPKGGIVRRELEDYSRRKHTEAGYQFVNSPHITKAQLFHTSGHLDWYADGMFPPMHIDAEYNADGSLRKPGQDYYLKPMNCPMHCLIFRARGRSYRELPLRLFEFGTVYRYEKSGVVHGLTRVRGLTMDDAHIFCTRDQMRDELRSLLRFVLDLLADYGLTDFYLELSTKDPEKFVGAEEVWEEATTVLAEVGAESGLELVPDPGGAAFYGPKISVQVKDALGRTWQMSTIQLDFNFPERFGLEYTAADGTRHRPVMIHRALFGSIERFFGILTEHYAGAFPAWLAPVQVVGIPVADEHVAYLEEVATQLKSHGVRAEVDASDDRMAKKIVHHTNHKVPFMVLAGDRDVAAGAVSFRFGDRTQINGVARDDAVAAIVAWIADRENAVPTAELVKVAGRE</sequence>